<sequence length="260" mass="29869">MSLTKIKHINKPRHIAIIMDGNGRWAKNRGKLRIFGHKAGVESAKKAIKFAINNHLNALTLYAFSSENWKRPIQEVSDLMELFSSVLNNAIDSFKKNNIRLKIIGDISKFNLKLQKYIKKSEKITYKNNGLNLNIAANYGGRWDIIQGVKKIAKQVKKGIIYPDQINESNFCRFICMNELVPVDLVIRTGGEHRISNFLLWQIAYSELFFTDVLWPDFDHVIFSNAINSFAKRERRFGKINSKCSKIYLKTGDASENSIN</sequence>
<evidence type="ECO:0000255" key="1">
    <source>
        <dbReference type="HAMAP-Rule" id="MF_01139"/>
    </source>
</evidence>
<organism>
    <name type="scientific">Wigglesworthia glossinidia brevipalpis</name>
    <dbReference type="NCBI Taxonomy" id="36870"/>
    <lineage>
        <taxon>Bacteria</taxon>
        <taxon>Pseudomonadati</taxon>
        <taxon>Pseudomonadota</taxon>
        <taxon>Gammaproteobacteria</taxon>
        <taxon>Enterobacterales</taxon>
        <taxon>Erwiniaceae</taxon>
        <taxon>Wigglesworthia</taxon>
    </lineage>
</organism>
<proteinExistence type="inferred from homology"/>
<name>UPPS_WIGBR</name>
<feature type="chain" id="PRO_0000123716" description="Ditrans,polycis-undecaprenyl-diphosphate synthase ((2E,6E)-farnesyl-diphosphate specific)">
    <location>
        <begin position="1"/>
        <end position="260"/>
    </location>
</feature>
<feature type="active site" evidence="1">
    <location>
        <position position="20"/>
    </location>
</feature>
<feature type="active site" description="Proton acceptor" evidence="1">
    <location>
        <position position="68"/>
    </location>
</feature>
<feature type="binding site" evidence="1">
    <location>
        <position position="20"/>
    </location>
    <ligand>
        <name>Mg(2+)</name>
        <dbReference type="ChEBI" id="CHEBI:18420"/>
    </ligand>
</feature>
<feature type="binding site" evidence="1">
    <location>
        <begin position="21"/>
        <end position="24"/>
    </location>
    <ligand>
        <name>substrate</name>
    </ligand>
</feature>
<feature type="binding site" evidence="1">
    <location>
        <position position="25"/>
    </location>
    <ligand>
        <name>substrate</name>
    </ligand>
</feature>
<feature type="binding site" evidence="1">
    <location>
        <position position="33"/>
    </location>
    <ligand>
        <name>substrate</name>
    </ligand>
</feature>
<feature type="binding site" evidence="1">
    <location>
        <position position="37"/>
    </location>
    <ligand>
        <name>substrate</name>
    </ligand>
</feature>
<feature type="binding site" evidence="1">
    <location>
        <begin position="65"/>
        <end position="67"/>
    </location>
    <ligand>
        <name>substrate</name>
    </ligand>
</feature>
<feature type="binding site" evidence="1">
    <location>
        <position position="69"/>
    </location>
    <ligand>
        <name>substrate</name>
    </ligand>
</feature>
<feature type="binding site" evidence="1">
    <location>
        <position position="71"/>
    </location>
    <ligand>
        <name>substrate</name>
    </ligand>
</feature>
<feature type="binding site" evidence="1">
    <location>
        <position position="188"/>
    </location>
    <ligand>
        <name>substrate</name>
    </ligand>
</feature>
<feature type="binding site" evidence="1">
    <location>
        <position position="193"/>
    </location>
    <ligand>
        <name>Mg(2+)</name>
        <dbReference type="ChEBI" id="CHEBI:18420"/>
    </ligand>
</feature>
<feature type="binding site" evidence="1">
    <location>
        <begin position="194"/>
        <end position="196"/>
    </location>
    <ligand>
        <name>substrate</name>
    </ligand>
</feature>
<feature type="binding site" evidence="1">
    <location>
        <position position="207"/>
    </location>
    <ligand>
        <name>Mg(2+)</name>
        <dbReference type="ChEBI" id="CHEBI:18420"/>
    </ligand>
</feature>
<keyword id="KW-0133">Cell shape</keyword>
<keyword id="KW-0961">Cell wall biogenesis/degradation</keyword>
<keyword id="KW-0460">Magnesium</keyword>
<keyword id="KW-0479">Metal-binding</keyword>
<keyword id="KW-0573">Peptidoglycan synthesis</keyword>
<keyword id="KW-1185">Reference proteome</keyword>
<keyword id="KW-0808">Transferase</keyword>
<comment type="function">
    <text evidence="1">Catalyzes the sequential condensation of isopentenyl diphosphate (IPP) with (2E,6E)-farnesyl diphosphate (E,E-FPP) to yield (2Z,6Z,10Z,14Z,18Z,22Z,26Z,30Z,34E,38E)-undecaprenyl diphosphate (di-trans,octa-cis-UPP). UPP is the precursor of glycosyl carrier lipid in the biosynthesis of bacterial cell wall polysaccharide components such as peptidoglycan and lipopolysaccharide.</text>
</comment>
<comment type="catalytic activity">
    <reaction evidence="1">
        <text>8 isopentenyl diphosphate + (2E,6E)-farnesyl diphosphate = di-trans,octa-cis-undecaprenyl diphosphate + 8 diphosphate</text>
        <dbReference type="Rhea" id="RHEA:27551"/>
        <dbReference type="ChEBI" id="CHEBI:33019"/>
        <dbReference type="ChEBI" id="CHEBI:58405"/>
        <dbReference type="ChEBI" id="CHEBI:128769"/>
        <dbReference type="ChEBI" id="CHEBI:175763"/>
        <dbReference type="EC" id="2.5.1.31"/>
    </reaction>
</comment>
<comment type="cofactor">
    <cofactor evidence="1">
        <name>Mg(2+)</name>
        <dbReference type="ChEBI" id="CHEBI:18420"/>
    </cofactor>
    <text evidence="1">Binds 2 magnesium ions per subunit.</text>
</comment>
<comment type="subunit">
    <text evidence="1">Homodimer.</text>
</comment>
<comment type="similarity">
    <text evidence="1">Belongs to the UPP synthase family.</text>
</comment>
<protein>
    <recommendedName>
        <fullName evidence="1">Ditrans,polycis-undecaprenyl-diphosphate synthase ((2E,6E)-farnesyl-diphosphate specific)</fullName>
        <ecNumber evidence="1">2.5.1.31</ecNumber>
    </recommendedName>
    <alternativeName>
        <fullName evidence="1">Ditrans,polycis-undecaprenylcistransferase</fullName>
    </alternativeName>
    <alternativeName>
        <fullName evidence="1">Undecaprenyl diphosphate synthase</fullName>
        <shortName evidence="1">UDS</shortName>
    </alternativeName>
    <alternativeName>
        <fullName evidence="1">Undecaprenyl pyrophosphate synthase</fullName>
        <shortName evidence="1">UPP synthase</shortName>
    </alternativeName>
</protein>
<reference key="1">
    <citation type="journal article" date="2002" name="Nat. Genet.">
        <title>Genome sequence of the endocellular obligate symbiont of tsetse flies, Wigglesworthia glossinidia.</title>
        <authorList>
            <person name="Akman L."/>
            <person name="Yamashita A."/>
            <person name="Watanabe H."/>
            <person name="Oshima K."/>
            <person name="Shiba T."/>
            <person name="Hattori M."/>
            <person name="Aksoy S."/>
        </authorList>
    </citation>
    <scope>NUCLEOTIDE SEQUENCE [LARGE SCALE GENOMIC DNA]</scope>
</reference>
<dbReference type="EC" id="2.5.1.31" evidence="1"/>
<dbReference type="EMBL" id="BA000021">
    <property type="protein sequence ID" value="BAC24533.1"/>
    <property type="molecule type" value="Genomic_DNA"/>
</dbReference>
<dbReference type="SMR" id="Q8D2G7"/>
<dbReference type="STRING" id="36870.gene:10368887"/>
<dbReference type="KEGG" id="wbr:yaeS"/>
<dbReference type="eggNOG" id="COG0020">
    <property type="taxonomic scope" value="Bacteria"/>
</dbReference>
<dbReference type="HOGENOM" id="CLU_038505_1_1_6"/>
<dbReference type="OrthoDB" id="4191603at2"/>
<dbReference type="Proteomes" id="UP000000562">
    <property type="component" value="Chromosome"/>
</dbReference>
<dbReference type="GO" id="GO:0005829">
    <property type="term" value="C:cytosol"/>
    <property type="evidence" value="ECO:0007669"/>
    <property type="project" value="TreeGrafter"/>
</dbReference>
<dbReference type="GO" id="GO:0008834">
    <property type="term" value="F:ditrans,polycis-undecaprenyl-diphosphate synthase [(2E,6E)-farnesyl-diphosphate specific] activity"/>
    <property type="evidence" value="ECO:0007669"/>
    <property type="project" value="UniProtKB-UniRule"/>
</dbReference>
<dbReference type="GO" id="GO:0000287">
    <property type="term" value="F:magnesium ion binding"/>
    <property type="evidence" value="ECO:0007669"/>
    <property type="project" value="UniProtKB-UniRule"/>
</dbReference>
<dbReference type="GO" id="GO:0071555">
    <property type="term" value="P:cell wall organization"/>
    <property type="evidence" value="ECO:0007669"/>
    <property type="project" value="UniProtKB-KW"/>
</dbReference>
<dbReference type="GO" id="GO:0009252">
    <property type="term" value="P:peptidoglycan biosynthetic process"/>
    <property type="evidence" value="ECO:0007669"/>
    <property type="project" value="UniProtKB-UniRule"/>
</dbReference>
<dbReference type="GO" id="GO:0016094">
    <property type="term" value="P:polyprenol biosynthetic process"/>
    <property type="evidence" value="ECO:0007669"/>
    <property type="project" value="TreeGrafter"/>
</dbReference>
<dbReference type="GO" id="GO:0008360">
    <property type="term" value="P:regulation of cell shape"/>
    <property type="evidence" value="ECO:0007669"/>
    <property type="project" value="UniProtKB-KW"/>
</dbReference>
<dbReference type="CDD" id="cd00475">
    <property type="entry name" value="Cis_IPPS"/>
    <property type="match status" value="1"/>
</dbReference>
<dbReference type="FunFam" id="3.40.1180.10:FF:000001">
    <property type="entry name" value="(2E,6E)-farnesyl-diphosphate-specific ditrans,polycis-undecaprenyl-diphosphate synthase"/>
    <property type="match status" value="1"/>
</dbReference>
<dbReference type="Gene3D" id="3.40.1180.10">
    <property type="entry name" value="Decaprenyl diphosphate synthase-like"/>
    <property type="match status" value="1"/>
</dbReference>
<dbReference type="HAMAP" id="MF_01139">
    <property type="entry name" value="ISPT"/>
    <property type="match status" value="1"/>
</dbReference>
<dbReference type="InterPro" id="IPR001441">
    <property type="entry name" value="UPP_synth-like"/>
</dbReference>
<dbReference type="InterPro" id="IPR018520">
    <property type="entry name" value="UPP_synth-like_CS"/>
</dbReference>
<dbReference type="InterPro" id="IPR036424">
    <property type="entry name" value="UPP_synth-like_sf"/>
</dbReference>
<dbReference type="NCBIfam" id="TIGR00055">
    <property type="entry name" value="uppS"/>
    <property type="match status" value="1"/>
</dbReference>
<dbReference type="PANTHER" id="PTHR10291:SF0">
    <property type="entry name" value="DEHYDRODOLICHYL DIPHOSPHATE SYNTHASE 2"/>
    <property type="match status" value="1"/>
</dbReference>
<dbReference type="PANTHER" id="PTHR10291">
    <property type="entry name" value="DEHYDRODOLICHYL DIPHOSPHATE SYNTHASE FAMILY MEMBER"/>
    <property type="match status" value="1"/>
</dbReference>
<dbReference type="Pfam" id="PF01255">
    <property type="entry name" value="Prenyltransf"/>
    <property type="match status" value="1"/>
</dbReference>
<dbReference type="SUPFAM" id="SSF64005">
    <property type="entry name" value="Undecaprenyl diphosphate synthase"/>
    <property type="match status" value="1"/>
</dbReference>
<dbReference type="PROSITE" id="PS01066">
    <property type="entry name" value="UPP_SYNTHASE"/>
    <property type="match status" value="1"/>
</dbReference>
<gene>
    <name evidence="1" type="primary">uppS</name>
    <name type="ordered locus">WIGBR3870</name>
</gene>
<accession>Q8D2G7</accession>